<gene>
    <name evidence="1" type="primary">glmM1</name>
    <name type="ordered locus">Sfri_0985</name>
</gene>
<reference key="1">
    <citation type="submission" date="2006-08" db="EMBL/GenBank/DDBJ databases">
        <title>Complete sequence of Shewanella frigidimarina NCIMB 400.</title>
        <authorList>
            <consortium name="US DOE Joint Genome Institute"/>
            <person name="Copeland A."/>
            <person name="Lucas S."/>
            <person name="Lapidus A."/>
            <person name="Barry K."/>
            <person name="Detter J.C."/>
            <person name="Glavina del Rio T."/>
            <person name="Hammon N."/>
            <person name="Israni S."/>
            <person name="Dalin E."/>
            <person name="Tice H."/>
            <person name="Pitluck S."/>
            <person name="Fredrickson J.K."/>
            <person name="Kolker E."/>
            <person name="McCuel L.A."/>
            <person name="DiChristina T."/>
            <person name="Nealson K.H."/>
            <person name="Newman D."/>
            <person name="Tiedje J.M."/>
            <person name="Zhou J."/>
            <person name="Romine M.F."/>
            <person name="Culley D.E."/>
            <person name="Serres M."/>
            <person name="Chertkov O."/>
            <person name="Brettin T."/>
            <person name="Bruce D."/>
            <person name="Han C."/>
            <person name="Tapia R."/>
            <person name="Gilna P."/>
            <person name="Schmutz J."/>
            <person name="Larimer F."/>
            <person name="Land M."/>
            <person name="Hauser L."/>
            <person name="Kyrpides N."/>
            <person name="Mikhailova N."/>
            <person name="Richardson P."/>
        </authorList>
    </citation>
    <scope>NUCLEOTIDE SEQUENCE [LARGE SCALE GENOMIC DNA]</scope>
    <source>
        <strain>NCIMB 400</strain>
    </source>
</reference>
<sequence>MKQRKFFGTDGIRGRVGAGKMTPELALKLGWAAGRVLSRNGTQKVIIGKDTRISGYLFESALEAGLSAAGLNVLLLGPMPTPAVAYLTRTFRAEAGVVISASHNPYYDNGIKFFSTDGSKLDDAIELEIEAELEKPLVCVESHLLGKARRIEDAAGRYIEYCKGNFPADQTLEGLKIVVDCAHGATYHIAPNVFRELGADVIAIGDKPDGLNINDKVGATSMAKICETVLAEKADLGIALDGDGDRIMMVNRHGEVVDGDQILYILAVDAQKRGILKGGVVGTLMSNLGLDLALQALDIPFVRSKVGDRYVMEMLRENEWRIGGENSGHILNLDHGTTGDGIVAGILVLAAMRRQNASLEQLTEPMKMLPQVLVNVRFEGDSNPLDTDAVKSAQADVELQLGARGRVLLRKSGTEPLIRVMVEGDDHPQVLAHANRIADAVKAAC</sequence>
<accession>Q086H7</accession>
<comment type="function">
    <text evidence="1">Catalyzes the conversion of glucosamine-6-phosphate to glucosamine-1-phosphate.</text>
</comment>
<comment type="catalytic activity">
    <reaction evidence="1">
        <text>alpha-D-glucosamine 1-phosphate = D-glucosamine 6-phosphate</text>
        <dbReference type="Rhea" id="RHEA:23424"/>
        <dbReference type="ChEBI" id="CHEBI:58516"/>
        <dbReference type="ChEBI" id="CHEBI:58725"/>
        <dbReference type="EC" id="5.4.2.10"/>
    </reaction>
</comment>
<comment type="cofactor">
    <cofactor evidence="1">
        <name>Mg(2+)</name>
        <dbReference type="ChEBI" id="CHEBI:18420"/>
    </cofactor>
    <text evidence="1">Binds 1 Mg(2+) ion per subunit.</text>
</comment>
<comment type="PTM">
    <text evidence="1">Activated by phosphorylation.</text>
</comment>
<comment type="similarity">
    <text evidence="1">Belongs to the phosphohexose mutase family.</text>
</comment>
<dbReference type="EC" id="5.4.2.10" evidence="1"/>
<dbReference type="EMBL" id="CP000447">
    <property type="protein sequence ID" value="ABI70838.1"/>
    <property type="molecule type" value="Genomic_DNA"/>
</dbReference>
<dbReference type="SMR" id="Q086H7"/>
<dbReference type="STRING" id="318167.Sfri_0985"/>
<dbReference type="KEGG" id="sfr:Sfri_0985"/>
<dbReference type="eggNOG" id="COG1109">
    <property type="taxonomic scope" value="Bacteria"/>
</dbReference>
<dbReference type="HOGENOM" id="CLU_016950_7_0_6"/>
<dbReference type="OrthoDB" id="9803322at2"/>
<dbReference type="Proteomes" id="UP000000684">
    <property type="component" value="Chromosome"/>
</dbReference>
<dbReference type="GO" id="GO:0005829">
    <property type="term" value="C:cytosol"/>
    <property type="evidence" value="ECO:0007669"/>
    <property type="project" value="TreeGrafter"/>
</dbReference>
<dbReference type="GO" id="GO:0000287">
    <property type="term" value="F:magnesium ion binding"/>
    <property type="evidence" value="ECO:0007669"/>
    <property type="project" value="UniProtKB-UniRule"/>
</dbReference>
<dbReference type="GO" id="GO:0008966">
    <property type="term" value="F:phosphoglucosamine mutase activity"/>
    <property type="evidence" value="ECO:0007669"/>
    <property type="project" value="UniProtKB-UniRule"/>
</dbReference>
<dbReference type="GO" id="GO:0004615">
    <property type="term" value="F:phosphomannomutase activity"/>
    <property type="evidence" value="ECO:0007669"/>
    <property type="project" value="TreeGrafter"/>
</dbReference>
<dbReference type="GO" id="GO:0005975">
    <property type="term" value="P:carbohydrate metabolic process"/>
    <property type="evidence" value="ECO:0007669"/>
    <property type="project" value="InterPro"/>
</dbReference>
<dbReference type="GO" id="GO:0009252">
    <property type="term" value="P:peptidoglycan biosynthetic process"/>
    <property type="evidence" value="ECO:0007669"/>
    <property type="project" value="TreeGrafter"/>
</dbReference>
<dbReference type="GO" id="GO:0006048">
    <property type="term" value="P:UDP-N-acetylglucosamine biosynthetic process"/>
    <property type="evidence" value="ECO:0007669"/>
    <property type="project" value="TreeGrafter"/>
</dbReference>
<dbReference type="CDD" id="cd05802">
    <property type="entry name" value="GlmM"/>
    <property type="match status" value="1"/>
</dbReference>
<dbReference type="FunFam" id="3.30.310.50:FF:000001">
    <property type="entry name" value="Phosphoglucosamine mutase"/>
    <property type="match status" value="1"/>
</dbReference>
<dbReference type="FunFam" id="3.40.120.10:FF:000001">
    <property type="entry name" value="Phosphoglucosamine mutase"/>
    <property type="match status" value="1"/>
</dbReference>
<dbReference type="FunFam" id="3.40.120.10:FF:000003">
    <property type="entry name" value="Phosphoglucosamine mutase"/>
    <property type="match status" value="1"/>
</dbReference>
<dbReference type="Gene3D" id="3.40.120.10">
    <property type="entry name" value="Alpha-D-Glucose-1,6-Bisphosphate, subunit A, domain 3"/>
    <property type="match status" value="3"/>
</dbReference>
<dbReference type="Gene3D" id="3.30.310.50">
    <property type="entry name" value="Alpha-D-phosphohexomutase, C-terminal domain"/>
    <property type="match status" value="1"/>
</dbReference>
<dbReference type="HAMAP" id="MF_01554_B">
    <property type="entry name" value="GlmM_B"/>
    <property type="match status" value="1"/>
</dbReference>
<dbReference type="InterPro" id="IPR005844">
    <property type="entry name" value="A-D-PHexomutase_a/b/a-I"/>
</dbReference>
<dbReference type="InterPro" id="IPR016055">
    <property type="entry name" value="A-D-PHexomutase_a/b/a-I/II/III"/>
</dbReference>
<dbReference type="InterPro" id="IPR005845">
    <property type="entry name" value="A-D-PHexomutase_a/b/a-II"/>
</dbReference>
<dbReference type="InterPro" id="IPR005846">
    <property type="entry name" value="A-D-PHexomutase_a/b/a-III"/>
</dbReference>
<dbReference type="InterPro" id="IPR005843">
    <property type="entry name" value="A-D-PHexomutase_C"/>
</dbReference>
<dbReference type="InterPro" id="IPR036900">
    <property type="entry name" value="A-D-PHexomutase_C_sf"/>
</dbReference>
<dbReference type="InterPro" id="IPR016066">
    <property type="entry name" value="A-D-PHexomutase_CS"/>
</dbReference>
<dbReference type="InterPro" id="IPR005841">
    <property type="entry name" value="Alpha-D-phosphohexomutase_SF"/>
</dbReference>
<dbReference type="InterPro" id="IPR006352">
    <property type="entry name" value="GlmM_bact"/>
</dbReference>
<dbReference type="InterPro" id="IPR050060">
    <property type="entry name" value="Phosphoglucosamine_mutase"/>
</dbReference>
<dbReference type="NCBIfam" id="TIGR01455">
    <property type="entry name" value="glmM"/>
    <property type="match status" value="1"/>
</dbReference>
<dbReference type="NCBIfam" id="NF008139">
    <property type="entry name" value="PRK10887.1"/>
    <property type="match status" value="1"/>
</dbReference>
<dbReference type="PANTHER" id="PTHR42946:SF1">
    <property type="entry name" value="PHOSPHOGLUCOMUTASE (ALPHA-D-GLUCOSE-1,6-BISPHOSPHATE-DEPENDENT)"/>
    <property type="match status" value="1"/>
</dbReference>
<dbReference type="PANTHER" id="PTHR42946">
    <property type="entry name" value="PHOSPHOHEXOSE MUTASE"/>
    <property type="match status" value="1"/>
</dbReference>
<dbReference type="Pfam" id="PF02878">
    <property type="entry name" value="PGM_PMM_I"/>
    <property type="match status" value="1"/>
</dbReference>
<dbReference type="Pfam" id="PF02879">
    <property type="entry name" value="PGM_PMM_II"/>
    <property type="match status" value="1"/>
</dbReference>
<dbReference type="Pfam" id="PF02880">
    <property type="entry name" value="PGM_PMM_III"/>
    <property type="match status" value="1"/>
</dbReference>
<dbReference type="Pfam" id="PF00408">
    <property type="entry name" value="PGM_PMM_IV"/>
    <property type="match status" value="1"/>
</dbReference>
<dbReference type="PRINTS" id="PR00509">
    <property type="entry name" value="PGMPMM"/>
</dbReference>
<dbReference type="SUPFAM" id="SSF55957">
    <property type="entry name" value="Phosphoglucomutase, C-terminal domain"/>
    <property type="match status" value="1"/>
</dbReference>
<dbReference type="SUPFAM" id="SSF53738">
    <property type="entry name" value="Phosphoglucomutase, first 3 domains"/>
    <property type="match status" value="3"/>
</dbReference>
<dbReference type="PROSITE" id="PS00710">
    <property type="entry name" value="PGM_PMM"/>
    <property type="match status" value="1"/>
</dbReference>
<feature type="chain" id="PRO_0000305672" description="Phosphoglucosamine mutase 1">
    <location>
        <begin position="1"/>
        <end position="445"/>
    </location>
</feature>
<feature type="active site" description="Phosphoserine intermediate" evidence="1">
    <location>
        <position position="102"/>
    </location>
</feature>
<feature type="binding site" description="via phosphate group" evidence="1">
    <location>
        <position position="102"/>
    </location>
    <ligand>
        <name>Mg(2+)</name>
        <dbReference type="ChEBI" id="CHEBI:18420"/>
    </ligand>
</feature>
<feature type="binding site" evidence="1">
    <location>
        <position position="241"/>
    </location>
    <ligand>
        <name>Mg(2+)</name>
        <dbReference type="ChEBI" id="CHEBI:18420"/>
    </ligand>
</feature>
<feature type="binding site" evidence="1">
    <location>
        <position position="243"/>
    </location>
    <ligand>
        <name>Mg(2+)</name>
        <dbReference type="ChEBI" id="CHEBI:18420"/>
    </ligand>
</feature>
<feature type="binding site" evidence="1">
    <location>
        <position position="245"/>
    </location>
    <ligand>
        <name>Mg(2+)</name>
        <dbReference type="ChEBI" id="CHEBI:18420"/>
    </ligand>
</feature>
<feature type="modified residue" description="Phosphoserine" evidence="1">
    <location>
        <position position="102"/>
    </location>
</feature>
<protein>
    <recommendedName>
        <fullName evidence="1">Phosphoglucosamine mutase 1</fullName>
        <ecNumber evidence="1">5.4.2.10</ecNumber>
    </recommendedName>
</protein>
<proteinExistence type="inferred from homology"/>
<evidence type="ECO:0000255" key="1">
    <source>
        <dbReference type="HAMAP-Rule" id="MF_01554"/>
    </source>
</evidence>
<organism>
    <name type="scientific">Shewanella frigidimarina (strain NCIMB 400)</name>
    <dbReference type="NCBI Taxonomy" id="318167"/>
    <lineage>
        <taxon>Bacteria</taxon>
        <taxon>Pseudomonadati</taxon>
        <taxon>Pseudomonadota</taxon>
        <taxon>Gammaproteobacteria</taxon>
        <taxon>Alteromonadales</taxon>
        <taxon>Shewanellaceae</taxon>
        <taxon>Shewanella</taxon>
    </lineage>
</organism>
<keyword id="KW-0413">Isomerase</keyword>
<keyword id="KW-0460">Magnesium</keyword>
<keyword id="KW-0479">Metal-binding</keyword>
<keyword id="KW-0597">Phosphoprotein</keyword>
<keyword id="KW-1185">Reference proteome</keyword>
<name>GLMM1_SHEFN</name>